<accession>A4Y4K4</accession>
<keyword id="KW-0963">Cytoplasm</keyword>
<keyword id="KW-0255">Endonuclease</keyword>
<keyword id="KW-0378">Hydrolase</keyword>
<keyword id="KW-0460">Magnesium</keyword>
<keyword id="KW-0479">Metal-binding</keyword>
<keyword id="KW-0507">mRNA processing</keyword>
<keyword id="KW-0540">Nuclease</keyword>
<keyword id="KW-0694">RNA-binding</keyword>
<keyword id="KW-0698">rRNA processing</keyword>
<keyword id="KW-0699">rRNA-binding</keyword>
<keyword id="KW-0819">tRNA processing</keyword>
<evidence type="ECO:0000255" key="1">
    <source>
        <dbReference type="HAMAP-Rule" id="MF_00104"/>
    </source>
</evidence>
<proteinExistence type="inferred from homology"/>
<reference key="1">
    <citation type="submission" date="2007-04" db="EMBL/GenBank/DDBJ databases">
        <title>Complete sequence of Shewanella putrefaciens CN-32.</title>
        <authorList>
            <consortium name="US DOE Joint Genome Institute"/>
            <person name="Copeland A."/>
            <person name="Lucas S."/>
            <person name="Lapidus A."/>
            <person name="Barry K."/>
            <person name="Detter J.C."/>
            <person name="Glavina del Rio T."/>
            <person name="Hammon N."/>
            <person name="Israni S."/>
            <person name="Dalin E."/>
            <person name="Tice H."/>
            <person name="Pitluck S."/>
            <person name="Chain P."/>
            <person name="Malfatti S."/>
            <person name="Shin M."/>
            <person name="Vergez L."/>
            <person name="Schmutz J."/>
            <person name="Larimer F."/>
            <person name="Land M."/>
            <person name="Hauser L."/>
            <person name="Kyrpides N."/>
            <person name="Mikhailova N."/>
            <person name="Romine M.F."/>
            <person name="Fredrickson J."/>
            <person name="Tiedje J."/>
            <person name="Richardson P."/>
        </authorList>
    </citation>
    <scope>NUCLEOTIDE SEQUENCE [LARGE SCALE GENOMIC DNA]</scope>
    <source>
        <strain>CN-32 / ATCC BAA-453</strain>
    </source>
</reference>
<organism>
    <name type="scientific">Shewanella putrefaciens (strain CN-32 / ATCC BAA-453)</name>
    <dbReference type="NCBI Taxonomy" id="319224"/>
    <lineage>
        <taxon>Bacteria</taxon>
        <taxon>Pseudomonadati</taxon>
        <taxon>Pseudomonadota</taxon>
        <taxon>Gammaproteobacteria</taxon>
        <taxon>Alteromonadales</taxon>
        <taxon>Shewanellaceae</taxon>
        <taxon>Shewanella</taxon>
    </lineage>
</organism>
<name>RNC_SHEPC</name>
<sequence length="226" mass="25332">MEPIKNLPRLCRTLGYEFTQIELLTQALTHRSAANKHNERLEFLGDSILSIVISDALYHQFPKATEGDLSRMRATLVRGDTLTIIAQEFKLGDYLYLGPGELKSGGFRRESILADAVEAIIGAIYLDSDLEVCRKLLLTWYAERLAEIQPGVSQKDAKTLLQEYLQGLKKPLPDYQVINIEGDAHDQTFTVECRIEDLSQSVIGVASSRRKAEQIAAAQVLELLKK</sequence>
<gene>
    <name evidence="1" type="primary">rnc</name>
    <name type="ordered locus">Sputcn32_1159</name>
</gene>
<comment type="function">
    <text evidence="1">Digests double-stranded RNA. Involved in the processing of primary rRNA transcript to yield the immediate precursors to the large and small rRNAs (23S and 16S). Processes some mRNAs, and tRNAs when they are encoded in the rRNA operon. Processes pre-crRNA and tracrRNA of type II CRISPR loci if present in the organism.</text>
</comment>
<comment type="catalytic activity">
    <reaction evidence="1">
        <text>Endonucleolytic cleavage to 5'-phosphomonoester.</text>
        <dbReference type="EC" id="3.1.26.3"/>
    </reaction>
</comment>
<comment type="cofactor">
    <cofactor evidence="1">
        <name>Mg(2+)</name>
        <dbReference type="ChEBI" id="CHEBI:18420"/>
    </cofactor>
</comment>
<comment type="subunit">
    <text evidence="1">Homodimer.</text>
</comment>
<comment type="subcellular location">
    <subcellularLocation>
        <location evidence="1">Cytoplasm</location>
    </subcellularLocation>
</comment>
<comment type="similarity">
    <text evidence="1">Belongs to the ribonuclease III family.</text>
</comment>
<dbReference type="EC" id="3.1.26.3" evidence="1"/>
<dbReference type="EMBL" id="CP000681">
    <property type="protein sequence ID" value="ABP74887.1"/>
    <property type="molecule type" value="Genomic_DNA"/>
</dbReference>
<dbReference type="SMR" id="A4Y4K4"/>
<dbReference type="STRING" id="319224.Sputcn32_1159"/>
<dbReference type="KEGG" id="spc:Sputcn32_1159"/>
<dbReference type="eggNOG" id="COG0571">
    <property type="taxonomic scope" value="Bacteria"/>
</dbReference>
<dbReference type="HOGENOM" id="CLU_000907_1_1_6"/>
<dbReference type="GO" id="GO:0005737">
    <property type="term" value="C:cytoplasm"/>
    <property type="evidence" value="ECO:0007669"/>
    <property type="project" value="UniProtKB-SubCell"/>
</dbReference>
<dbReference type="GO" id="GO:0003725">
    <property type="term" value="F:double-stranded RNA binding"/>
    <property type="evidence" value="ECO:0007669"/>
    <property type="project" value="TreeGrafter"/>
</dbReference>
<dbReference type="GO" id="GO:0046872">
    <property type="term" value="F:metal ion binding"/>
    <property type="evidence" value="ECO:0007669"/>
    <property type="project" value="UniProtKB-KW"/>
</dbReference>
<dbReference type="GO" id="GO:0004525">
    <property type="term" value="F:ribonuclease III activity"/>
    <property type="evidence" value="ECO:0007669"/>
    <property type="project" value="UniProtKB-UniRule"/>
</dbReference>
<dbReference type="GO" id="GO:0019843">
    <property type="term" value="F:rRNA binding"/>
    <property type="evidence" value="ECO:0007669"/>
    <property type="project" value="UniProtKB-KW"/>
</dbReference>
<dbReference type="GO" id="GO:0006397">
    <property type="term" value="P:mRNA processing"/>
    <property type="evidence" value="ECO:0007669"/>
    <property type="project" value="UniProtKB-UniRule"/>
</dbReference>
<dbReference type="GO" id="GO:0010468">
    <property type="term" value="P:regulation of gene expression"/>
    <property type="evidence" value="ECO:0007669"/>
    <property type="project" value="TreeGrafter"/>
</dbReference>
<dbReference type="GO" id="GO:0006364">
    <property type="term" value="P:rRNA processing"/>
    <property type="evidence" value="ECO:0007669"/>
    <property type="project" value="UniProtKB-UniRule"/>
</dbReference>
<dbReference type="GO" id="GO:0008033">
    <property type="term" value="P:tRNA processing"/>
    <property type="evidence" value="ECO:0007669"/>
    <property type="project" value="UniProtKB-KW"/>
</dbReference>
<dbReference type="CDD" id="cd10845">
    <property type="entry name" value="DSRM_RNAse_III_family"/>
    <property type="match status" value="1"/>
</dbReference>
<dbReference type="CDD" id="cd00593">
    <property type="entry name" value="RIBOc"/>
    <property type="match status" value="1"/>
</dbReference>
<dbReference type="FunFam" id="1.10.1520.10:FF:000001">
    <property type="entry name" value="Ribonuclease 3"/>
    <property type="match status" value="1"/>
</dbReference>
<dbReference type="FunFam" id="3.30.160.20:FF:000003">
    <property type="entry name" value="Ribonuclease 3"/>
    <property type="match status" value="1"/>
</dbReference>
<dbReference type="Gene3D" id="3.30.160.20">
    <property type="match status" value="1"/>
</dbReference>
<dbReference type="Gene3D" id="1.10.1520.10">
    <property type="entry name" value="Ribonuclease III domain"/>
    <property type="match status" value="1"/>
</dbReference>
<dbReference type="HAMAP" id="MF_00104">
    <property type="entry name" value="RNase_III"/>
    <property type="match status" value="1"/>
</dbReference>
<dbReference type="InterPro" id="IPR014720">
    <property type="entry name" value="dsRBD_dom"/>
</dbReference>
<dbReference type="InterPro" id="IPR011907">
    <property type="entry name" value="RNase_III"/>
</dbReference>
<dbReference type="InterPro" id="IPR000999">
    <property type="entry name" value="RNase_III_dom"/>
</dbReference>
<dbReference type="InterPro" id="IPR036389">
    <property type="entry name" value="RNase_III_sf"/>
</dbReference>
<dbReference type="NCBIfam" id="TIGR02191">
    <property type="entry name" value="RNaseIII"/>
    <property type="match status" value="1"/>
</dbReference>
<dbReference type="PANTHER" id="PTHR11207:SF0">
    <property type="entry name" value="RIBONUCLEASE 3"/>
    <property type="match status" value="1"/>
</dbReference>
<dbReference type="PANTHER" id="PTHR11207">
    <property type="entry name" value="RIBONUCLEASE III"/>
    <property type="match status" value="1"/>
</dbReference>
<dbReference type="Pfam" id="PF00035">
    <property type="entry name" value="dsrm"/>
    <property type="match status" value="1"/>
</dbReference>
<dbReference type="Pfam" id="PF14622">
    <property type="entry name" value="Ribonucleas_3_3"/>
    <property type="match status" value="1"/>
</dbReference>
<dbReference type="SMART" id="SM00358">
    <property type="entry name" value="DSRM"/>
    <property type="match status" value="1"/>
</dbReference>
<dbReference type="SMART" id="SM00535">
    <property type="entry name" value="RIBOc"/>
    <property type="match status" value="1"/>
</dbReference>
<dbReference type="SUPFAM" id="SSF54768">
    <property type="entry name" value="dsRNA-binding domain-like"/>
    <property type="match status" value="1"/>
</dbReference>
<dbReference type="SUPFAM" id="SSF69065">
    <property type="entry name" value="RNase III domain-like"/>
    <property type="match status" value="1"/>
</dbReference>
<dbReference type="PROSITE" id="PS50137">
    <property type="entry name" value="DS_RBD"/>
    <property type="match status" value="1"/>
</dbReference>
<dbReference type="PROSITE" id="PS00517">
    <property type="entry name" value="RNASE_3_1"/>
    <property type="match status" value="1"/>
</dbReference>
<dbReference type="PROSITE" id="PS50142">
    <property type="entry name" value="RNASE_3_2"/>
    <property type="match status" value="1"/>
</dbReference>
<protein>
    <recommendedName>
        <fullName evidence="1">Ribonuclease 3</fullName>
        <ecNumber evidence="1">3.1.26.3</ecNumber>
    </recommendedName>
    <alternativeName>
        <fullName evidence="1">Ribonuclease III</fullName>
        <shortName evidence="1">RNase III</shortName>
    </alternativeName>
</protein>
<feature type="chain" id="PRO_1000075816" description="Ribonuclease 3">
    <location>
        <begin position="1"/>
        <end position="226"/>
    </location>
</feature>
<feature type="domain" description="RNase III" evidence="1">
    <location>
        <begin position="7"/>
        <end position="129"/>
    </location>
</feature>
<feature type="domain" description="DRBM" evidence="1">
    <location>
        <begin position="156"/>
        <end position="226"/>
    </location>
</feature>
<feature type="active site" evidence="1">
    <location>
        <position position="46"/>
    </location>
</feature>
<feature type="active site" evidence="1">
    <location>
        <position position="118"/>
    </location>
</feature>
<feature type="binding site" evidence="1">
    <location>
        <position position="42"/>
    </location>
    <ligand>
        <name>Mg(2+)</name>
        <dbReference type="ChEBI" id="CHEBI:18420"/>
    </ligand>
</feature>
<feature type="binding site" evidence="1">
    <location>
        <position position="115"/>
    </location>
    <ligand>
        <name>Mg(2+)</name>
        <dbReference type="ChEBI" id="CHEBI:18420"/>
    </ligand>
</feature>
<feature type="binding site" evidence="1">
    <location>
        <position position="118"/>
    </location>
    <ligand>
        <name>Mg(2+)</name>
        <dbReference type="ChEBI" id="CHEBI:18420"/>
    </ligand>
</feature>